<dbReference type="EC" id="7.1.1.2"/>
<dbReference type="EMBL" id="DQ355298">
    <property type="protein sequence ID" value="ABD39261.1"/>
    <property type="molecule type" value="Genomic_DNA"/>
</dbReference>
<dbReference type="RefSeq" id="YP_659455.1">
    <property type="nucleotide sequence ID" value="NC_008216.1"/>
</dbReference>
<dbReference type="SMR" id="Q15GR0"/>
<dbReference type="GeneID" id="4171512"/>
<dbReference type="CTD" id="4539"/>
<dbReference type="GO" id="GO:0005743">
    <property type="term" value="C:mitochondrial inner membrane"/>
    <property type="evidence" value="ECO:0000250"/>
    <property type="project" value="UniProtKB"/>
</dbReference>
<dbReference type="GO" id="GO:0045271">
    <property type="term" value="C:respiratory chain complex I"/>
    <property type="evidence" value="ECO:0000250"/>
    <property type="project" value="UniProtKB"/>
</dbReference>
<dbReference type="GO" id="GO:0008137">
    <property type="term" value="F:NADH dehydrogenase (ubiquinone) activity"/>
    <property type="evidence" value="ECO:0000250"/>
    <property type="project" value="UniProtKB"/>
</dbReference>
<dbReference type="GO" id="GO:0042773">
    <property type="term" value="P:ATP synthesis coupled electron transport"/>
    <property type="evidence" value="ECO:0007669"/>
    <property type="project" value="InterPro"/>
</dbReference>
<dbReference type="FunFam" id="1.10.287.3510:FF:000002">
    <property type="entry name" value="NADH-ubiquinone oxidoreductase chain 4L"/>
    <property type="match status" value="1"/>
</dbReference>
<dbReference type="Gene3D" id="1.10.287.3510">
    <property type="match status" value="1"/>
</dbReference>
<dbReference type="InterPro" id="IPR001133">
    <property type="entry name" value="NADH_UbQ_OxRdtase_chain4L/K"/>
</dbReference>
<dbReference type="InterPro" id="IPR039428">
    <property type="entry name" value="NUOK/Mnh_C1-like"/>
</dbReference>
<dbReference type="PANTHER" id="PTHR11434:SF0">
    <property type="entry name" value="NADH-UBIQUINONE OXIDOREDUCTASE CHAIN 4L"/>
    <property type="match status" value="1"/>
</dbReference>
<dbReference type="PANTHER" id="PTHR11434">
    <property type="entry name" value="NADH-UBIQUINONE OXIDOREDUCTASE SUBUNIT ND4L"/>
    <property type="match status" value="1"/>
</dbReference>
<dbReference type="Pfam" id="PF00420">
    <property type="entry name" value="Oxidored_q2"/>
    <property type="match status" value="1"/>
</dbReference>
<comment type="function">
    <text evidence="1">Core subunit of the mitochondrial membrane respiratory chain NADH dehydrogenase (Complex I) which catalyzes electron transfer from NADH through the respiratory chain, using ubiquinone as an electron acceptor. Part of the enzyme membrane arm which is embedded in the lipid bilayer and involved in proton translocation.</text>
</comment>
<comment type="catalytic activity">
    <reaction evidence="1">
        <text>a ubiquinone + NADH + 5 H(+)(in) = a ubiquinol + NAD(+) + 4 H(+)(out)</text>
        <dbReference type="Rhea" id="RHEA:29091"/>
        <dbReference type="Rhea" id="RHEA-COMP:9565"/>
        <dbReference type="Rhea" id="RHEA-COMP:9566"/>
        <dbReference type="ChEBI" id="CHEBI:15378"/>
        <dbReference type="ChEBI" id="CHEBI:16389"/>
        <dbReference type="ChEBI" id="CHEBI:17976"/>
        <dbReference type="ChEBI" id="CHEBI:57540"/>
        <dbReference type="ChEBI" id="CHEBI:57945"/>
        <dbReference type="EC" id="7.1.1.2"/>
    </reaction>
    <physiologicalReaction direction="left-to-right" evidence="1">
        <dbReference type="Rhea" id="RHEA:29092"/>
    </physiologicalReaction>
</comment>
<comment type="subunit">
    <text evidence="2">Core subunit of respiratory chain NADH dehydrogenase (Complex I) which is composed of 45 different subunits.</text>
</comment>
<comment type="subcellular location">
    <subcellularLocation>
        <location evidence="2">Mitochondrion inner membrane</location>
        <topology evidence="3">Multi-pass membrane protein</topology>
    </subcellularLocation>
</comment>
<comment type="similarity">
    <text evidence="4">Belongs to the complex I subunit 4L family.</text>
</comment>
<sequence>MPIIYTNIVLAFMISLLGMLIYRSHLMSSLLCLEGMMLSLFMMSTLMALNMHFPLANIVPIALLVFAACEAAVGLALLISISNTYGLDHIHNLNLLQC</sequence>
<feature type="chain" id="PRO_0000275073" description="NADH-ubiquinone oxidoreductase chain 4L">
    <location>
        <begin position="1"/>
        <end position="98"/>
    </location>
</feature>
<feature type="transmembrane region" description="Helical" evidence="3">
    <location>
        <begin position="1"/>
        <end position="21"/>
    </location>
</feature>
<feature type="transmembrane region" description="Helical" evidence="3">
    <location>
        <begin position="29"/>
        <end position="49"/>
    </location>
</feature>
<feature type="transmembrane region" description="Helical" evidence="3">
    <location>
        <begin position="58"/>
        <end position="78"/>
    </location>
</feature>
<accession>Q15GR0</accession>
<geneLocation type="mitochondrion"/>
<protein>
    <recommendedName>
        <fullName>NADH-ubiquinone oxidoreductase chain 4L</fullName>
        <ecNumber>7.1.1.2</ecNumber>
    </recommendedName>
    <alternativeName>
        <fullName>NADH dehydrogenase subunit 4L</fullName>
    </alternativeName>
</protein>
<name>NU4LM_NASLA</name>
<proteinExistence type="inferred from homology"/>
<evidence type="ECO:0000250" key="1">
    <source>
        <dbReference type="UniProtKB" id="P03901"/>
    </source>
</evidence>
<evidence type="ECO:0000250" key="2">
    <source>
        <dbReference type="UniProtKB" id="P03902"/>
    </source>
</evidence>
<evidence type="ECO:0000255" key="3"/>
<evidence type="ECO:0000305" key="4"/>
<gene>
    <name type="primary">MT-ND4L</name>
    <name type="synonym">MTND4L</name>
    <name type="synonym">NADH4L</name>
    <name type="synonym">ND4L</name>
</gene>
<keyword id="KW-0249">Electron transport</keyword>
<keyword id="KW-0472">Membrane</keyword>
<keyword id="KW-0496">Mitochondrion</keyword>
<keyword id="KW-0999">Mitochondrion inner membrane</keyword>
<keyword id="KW-0520">NAD</keyword>
<keyword id="KW-0679">Respiratory chain</keyword>
<keyword id="KW-1278">Translocase</keyword>
<keyword id="KW-0812">Transmembrane</keyword>
<keyword id="KW-1133">Transmembrane helix</keyword>
<keyword id="KW-0813">Transport</keyword>
<keyword id="KW-0830">Ubiquinone</keyword>
<organism>
    <name type="scientific">Nasalis larvatus</name>
    <name type="common">Proboscis monkey</name>
    <dbReference type="NCBI Taxonomy" id="43780"/>
    <lineage>
        <taxon>Eukaryota</taxon>
        <taxon>Metazoa</taxon>
        <taxon>Chordata</taxon>
        <taxon>Craniata</taxon>
        <taxon>Vertebrata</taxon>
        <taxon>Euteleostomi</taxon>
        <taxon>Mammalia</taxon>
        <taxon>Eutheria</taxon>
        <taxon>Euarchontoglires</taxon>
        <taxon>Primates</taxon>
        <taxon>Haplorrhini</taxon>
        <taxon>Catarrhini</taxon>
        <taxon>Cercopithecidae</taxon>
        <taxon>Colobinae</taxon>
        <taxon>Nasalis</taxon>
    </lineage>
</organism>
<reference key="1">
    <citation type="journal article" date="2006" name="Mol. Phylogenet. Evol.">
        <title>Mitochondrial data support an odd-nosed colobine clade.</title>
        <authorList>
            <person name="Sterner K.N."/>
            <person name="Raaum R.L."/>
            <person name="Zhang Y.-P."/>
            <person name="Stewart C.-B.R."/>
            <person name="Disotell T.R."/>
        </authorList>
    </citation>
    <scope>NUCLEOTIDE SEQUENCE [GENOMIC DNA]</scope>
</reference>